<keyword id="KW-0131">Cell cycle</keyword>
<keyword id="KW-0132">Cell division</keyword>
<keyword id="KW-0159">Chromosome partition</keyword>
<keyword id="KW-0963">Cytoplasm</keyword>
<organism>
    <name type="scientific">Lactobacillus johnsonii (strain CNCM I-12250 / La1 / NCC 533)</name>
    <dbReference type="NCBI Taxonomy" id="257314"/>
    <lineage>
        <taxon>Bacteria</taxon>
        <taxon>Bacillati</taxon>
        <taxon>Bacillota</taxon>
        <taxon>Bacilli</taxon>
        <taxon>Lactobacillales</taxon>
        <taxon>Lactobacillaceae</taxon>
        <taxon>Lactobacillus</taxon>
    </lineage>
</organism>
<proteinExistence type="inferred from homology"/>
<gene>
    <name evidence="1" type="primary">scpB</name>
    <name type="ordered locus">LJ_1085</name>
</gene>
<feature type="chain" id="PRO_0000211132" description="Segregation and condensation protein B">
    <location>
        <begin position="1"/>
        <end position="196"/>
    </location>
</feature>
<dbReference type="EMBL" id="AE017198">
    <property type="protein sequence ID" value="AAS08907.1"/>
    <property type="molecule type" value="Genomic_DNA"/>
</dbReference>
<dbReference type="RefSeq" id="WP_004897443.1">
    <property type="nucleotide sequence ID" value="NC_005362.1"/>
</dbReference>
<dbReference type="SMR" id="Q74JM2"/>
<dbReference type="KEGG" id="ljo:LJ_1085"/>
<dbReference type="eggNOG" id="COG1386">
    <property type="taxonomic scope" value="Bacteria"/>
</dbReference>
<dbReference type="HOGENOM" id="CLU_045647_5_3_9"/>
<dbReference type="Proteomes" id="UP000000581">
    <property type="component" value="Chromosome"/>
</dbReference>
<dbReference type="GO" id="GO:0005737">
    <property type="term" value="C:cytoplasm"/>
    <property type="evidence" value="ECO:0007669"/>
    <property type="project" value="UniProtKB-SubCell"/>
</dbReference>
<dbReference type="GO" id="GO:0051301">
    <property type="term" value="P:cell division"/>
    <property type="evidence" value="ECO:0007669"/>
    <property type="project" value="UniProtKB-KW"/>
</dbReference>
<dbReference type="GO" id="GO:0051304">
    <property type="term" value="P:chromosome separation"/>
    <property type="evidence" value="ECO:0007669"/>
    <property type="project" value="InterPro"/>
</dbReference>
<dbReference type="GO" id="GO:0006260">
    <property type="term" value="P:DNA replication"/>
    <property type="evidence" value="ECO:0007669"/>
    <property type="project" value="UniProtKB-UniRule"/>
</dbReference>
<dbReference type="Gene3D" id="1.10.10.10">
    <property type="entry name" value="Winged helix-like DNA-binding domain superfamily/Winged helix DNA-binding domain"/>
    <property type="match status" value="2"/>
</dbReference>
<dbReference type="HAMAP" id="MF_01804">
    <property type="entry name" value="ScpB"/>
    <property type="match status" value="1"/>
</dbReference>
<dbReference type="InterPro" id="IPR005234">
    <property type="entry name" value="ScpB_csome_segregation"/>
</dbReference>
<dbReference type="InterPro" id="IPR036388">
    <property type="entry name" value="WH-like_DNA-bd_sf"/>
</dbReference>
<dbReference type="InterPro" id="IPR036390">
    <property type="entry name" value="WH_DNA-bd_sf"/>
</dbReference>
<dbReference type="NCBIfam" id="TIGR00281">
    <property type="entry name" value="SMC-Scp complex subunit ScpB"/>
    <property type="match status" value="1"/>
</dbReference>
<dbReference type="PANTHER" id="PTHR34298">
    <property type="entry name" value="SEGREGATION AND CONDENSATION PROTEIN B"/>
    <property type="match status" value="1"/>
</dbReference>
<dbReference type="PANTHER" id="PTHR34298:SF2">
    <property type="entry name" value="SEGREGATION AND CONDENSATION PROTEIN B"/>
    <property type="match status" value="1"/>
</dbReference>
<dbReference type="Pfam" id="PF04079">
    <property type="entry name" value="SMC_ScpB"/>
    <property type="match status" value="1"/>
</dbReference>
<dbReference type="PIRSF" id="PIRSF019345">
    <property type="entry name" value="ScpB"/>
    <property type="match status" value="1"/>
</dbReference>
<dbReference type="SUPFAM" id="SSF46785">
    <property type="entry name" value="Winged helix' DNA-binding domain"/>
    <property type="match status" value="2"/>
</dbReference>
<accession>Q74JM2</accession>
<comment type="function">
    <text evidence="1">Participates in chromosomal partition during cell division. May act via the formation of a condensin-like complex containing Smc and ScpA that pull DNA away from mid-cell into both cell halves.</text>
</comment>
<comment type="subunit">
    <text evidence="1">Homodimer. Homodimerization may be required to stabilize the binding of ScpA to the Smc head domains. Component of a cohesin-like complex composed of ScpA, ScpB and the Smc homodimer, in which ScpA and ScpB bind to the head domain of Smc. The presence of the three proteins is required for the association of the complex with DNA.</text>
</comment>
<comment type="subcellular location">
    <subcellularLocation>
        <location evidence="1">Cytoplasm</location>
    </subcellularLocation>
    <text evidence="1">Associated with two foci at the outer edges of the nucleoid region in young cells, and at four foci within both cell halves in older cells.</text>
</comment>
<comment type="similarity">
    <text evidence="1">Belongs to the ScpB family.</text>
</comment>
<name>SCPB_LACJO</name>
<sequence>MASKEAELEALLYAAGDDGLETENLLQLLEISPAALRELANHLKDRLKNDENSGLQLICINQTYKLTTSPKCGDIISKFFQKDLSKNLSQSALEILSIIAYRQPITRVEIDDLRGVNSAGALQTLVWRGLIKVDGKKDVPGHPNLYVTTDYFLQYFNYESLADLPVIEEFEADDNPVNLFNQDDSRNKEINFDEGE</sequence>
<protein>
    <recommendedName>
        <fullName evidence="1">Segregation and condensation protein B</fullName>
    </recommendedName>
</protein>
<evidence type="ECO:0000255" key="1">
    <source>
        <dbReference type="HAMAP-Rule" id="MF_01804"/>
    </source>
</evidence>
<reference key="1">
    <citation type="journal article" date="2004" name="Proc. Natl. Acad. Sci. U.S.A.">
        <title>The genome sequence of the probiotic intestinal bacterium Lactobacillus johnsonii NCC 533.</title>
        <authorList>
            <person name="Pridmore R.D."/>
            <person name="Berger B."/>
            <person name="Desiere F."/>
            <person name="Vilanova D."/>
            <person name="Barretto C."/>
            <person name="Pittet A.-C."/>
            <person name="Zwahlen M.-C."/>
            <person name="Rouvet M."/>
            <person name="Altermann E."/>
            <person name="Barrangou R."/>
            <person name="Mollet B."/>
            <person name="Mercenier A."/>
            <person name="Klaenhammer T."/>
            <person name="Arigoni F."/>
            <person name="Schell M.A."/>
        </authorList>
    </citation>
    <scope>NUCLEOTIDE SEQUENCE [LARGE SCALE GENOMIC DNA]</scope>
    <source>
        <strain>CNCM I-1225 / La1 / NCC 533</strain>
    </source>
</reference>